<name>PAN2_KLULA</name>
<comment type="function">
    <text evidence="1">Catalytic subunit of the poly(A)-nuclease (PAN) deadenylation complex, one of two cytoplasmic mRNA deadenylases involved in mRNA turnover. PAN specifically shortens poly(A) tails of RNA and the activity is stimulated by poly(A)-binding protein PAB1. PAN deadenylation is followed by rapid degradation of the shortened mRNA tails by the CCR4-NOT complex. Deadenylated mRNAs are then degraded by two alternative mechanisms, namely exosome-mediated 3'-5' exonucleolytic degradation, or deadenylation-dependent mRNA decaping and subsequent 5'-3' exonucleolytic degradation by XRN1. May also be involved in post-transcriptional maturation of mRNA poly(A) tails.</text>
</comment>
<comment type="catalytic activity">
    <reaction evidence="1">
        <text>Exonucleolytic cleavage of poly(A) to 5'-AMP.</text>
        <dbReference type="EC" id="3.1.13.4"/>
    </reaction>
</comment>
<comment type="cofactor">
    <cofactor evidence="1">
        <name>a divalent metal cation</name>
        <dbReference type="ChEBI" id="CHEBI:60240"/>
    </cofactor>
    <text evidence="1">Binds 2 metal cations per subunit in the catalytic exonuclease domain.</text>
</comment>
<comment type="activity regulation">
    <text evidence="1">Positively regulated by the regulatory subunit PAN3.</text>
</comment>
<comment type="subunit">
    <text evidence="1">Forms a heterotrimer with an asymmetric homodimer of the regulatory subunit PAN3 to form the poly(A)-nuclease (PAN) deadenylation complex.</text>
</comment>
<comment type="subcellular location">
    <subcellularLocation>
        <location evidence="1">Cytoplasm</location>
    </subcellularLocation>
</comment>
<comment type="domain">
    <text evidence="1">Contains a pseudo-UCH domain. This ubiquitin C-terminal hydrolase (UCH)-like or ubiquitin specific protease (USP)-like domain is predicted to be catalytically inactive because it lacks the active site catalytic triad characteristic of thiol proteases, with residues at the equivalent structural positions that are incompatible with catalysis, and it cannot bind ubiquitin. It functions as a structural scaffold for intra- and intermolecular interactions in the complex.</text>
</comment>
<comment type="domain">
    <text evidence="1">The linker, or PAN3 interaction domain (PID), between the WD40 repeats and the pseudo-UCH domain mediates interaction with PAN3.</text>
</comment>
<comment type="similarity">
    <text evidence="1">Belongs to the peptidase C19 family. PAN2 subfamily.</text>
</comment>
<feature type="chain" id="PRO_0000295347" description="PAN2-PAN3 deadenylation complex catalytic subunit PAN2">
    <location>
        <begin position="1"/>
        <end position="1144"/>
    </location>
</feature>
<feature type="repeat" description="WD 1" evidence="1">
    <location>
        <begin position="27"/>
        <end position="66"/>
    </location>
</feature>
<feature type="repeat" description="WD 2" evidence="1">
    <location>
        <begin position="153"/>
        <end position="193"/>
    </location>
</feature>
<feature type="repeat" description="WD 3" evidence="1">
    <location>
        <begin position="196"/>
        <end position="233"/>
    </location>
</feature>
<feature type="repeat" description="WD 4" evidence="1">
    <location>
        <begin position="302"/>
        <end position="341"/>
    </location>
</feature>
<feature type="domain" description="USP" evidence="1">
    <location>
        <begin position="482"/>
        <end position="887"/>
    </location>
</feature>
<feature type="domain" description="Exonuclease" evidence="1">
    <location>
        <begin position="939"/>
        <end position="1110"/>
    </location>
</feature>
<feature type="region of interest" description="Linker" evidence="1">
    <location>
        <begin position="344"/>
        <end position="481"/>
    </location>
</feature>
<feature type="binding site" evidence="1">
    <location>
        <position position="942"/>
    </location>
    <ligand>
        <name>a divalent metal cation</name>
        <dbReference type="ChEBI" id="CHEBI:60240"/>
        <note>catalytic</note>
    </ligand>
</feature>
<feature type="binding site" evidence="1">
    <location>
        <position position="944"/>
    </location>
    <ligand>
        <name>a divalent metal cation</name>
        <dbReference type="ChEBI" id="CHEBI:60240"/>
        <note>catalytic</note>
    </ligand>
</feature>
<feature type="binding site" evidence="1">
    <location>
        <position position="1051"/>
    </location>
    <ligand>
        <name>a divalent metal cation</name>
        <dbReference type="ChEBI" id="CHEBI:60240"/>
        <note>catalytic</note>
    </ligand>
</feature>
<feature type="binding site" evidence="1">
    <location>
        <position position="1102"/>
    </location>
    <ligand>
        <name>a divalent metal cation</name>
        <dbReference type="ChEBI" id="CHEBI:60240"/>
        <note>catalytic</note>
    </ligand>
</feature>
<proteinExistence type="inferred from homology"/>
<evidence type="ECO:0000255" key="1">
    <source>
        <dbReference type="HAMAP-Rule" id="MF_03182"/>
    </source>
</evidence>
<organism>
    <name type="scientific">Kluyveromyces lactis (strain ATCC 8585 / CBS 2359 / DSM 70799 / NBRC 1267 / NRRL Y-1140 / WM37)</name>
    <name type="common">Yeast</name>
    <name type="synonym">Candida sphaerica</name>
    <dbReference type="NCBI Taxonomy" id="284590"/>
    <lineage>
        <taxon>Eukaryota</taxon>
        <taxon>Fungi</taxon>
        <taxon>Dikarya</taxon>
        <taxon>Ascomycota</taxon>
        <taxon>Saccharomycotina</taxon>
        <taxon>Saccharomycetes</taxon>
        <taxon>Saccharomycetales</taxon>
        <taxon>Saccharomycetaceae</taxon>
        <taxon>Kluyveromyces</taxon>
    </lineage>
</organism>
<dbReference type="EC" id="3.1.13.4" evidence="1"/>
<dbReference type="EMBL" id="CR382125">
    <property type="protein sequence ID" value="CAG99891.1"/>
    <property type="molecule type" value="Genomic_DNA"/>
</dbReference>
<dbReference type="RefSeq" id="XP_454804.1">
    <property type="nucleotide sequence ID" value="XM_454804.1"/>
</dbReference>
<dbReference type="SMR" id="Q6CMN5"/>
<dbReference type="FunCoup" id="Q6CMN5">
    <property type="interactions" value="735"/>
</dbReference>
<dbReference type="STRING" id="284590.Q6CMN5"/>
<dbReference type="PaxDb" id="284590-Q6CMN5"/>
<dbReference type="KEGG" id="kla:KLLA0_E18877g"/>
<dbReference type="eggNOG" id="KOG1275">
    <property type="taxonomic scope" value="Eukaryota"/>
</dbReference>
<dbReference type="HOGENOM" id="CLU_002369_1_0_1"/>
<dbReference type="InParanoid" id="Q6CMN5"/>
<dbReference type="OMA" id="TQELLWT"/>
<dbReference type="Proteomes" id="UP000000598">
    <property type="component" value="Chromosome E"/>
</dbReference>
<dbReference type="GO" id="GO:0000932">
    <property type="term" value="C:P-body"/>
    <property type="evidence" value="ECO:0007669"/>
    <property type="project" value="TreeGrafter"/>
</dbReference>
<dbReference type="GO" id="GO:0031251">
    <property type="term" value="C:PAN complex"/>
    <property type="evidence" value="ECO:0007669"/>
    <property type="project" value="UniProtKB-UniRule"/>
</dbReference>
<dbReference type="GO" id="GO:0046872">
    <property type="term" value="F:metal ion binding"/>
    <property type="evidence" value="ECO:0007669"/>
    <property type="project" value="UniProtKB-KW"/>
</dbReference>
<dbReference type="GO" id="GO:0003676">
    <property type="term" value="F:nucleic acid binding"/>
    <property type="evidence" value="ECO:0007669"/>
    <property type="project" value="InterPro"/>
</dbReference>
<dbReference type="GO" id="GO:0004535">
    <property type="term" value="F:poly(A)-specific ribonuclease activity"/>
    <property type="evidence" value="ECO:0007669"/>
    <property type="project" value="UniProtKB-UniRule"/>
</dbReference>
<dbReference type="GO" id="GO:0006397">
    <property type="term" value="P:mRNA processing"/>
    <property type="evidence" value="ECO:0007669"/>
    <property type="project" value="UniProtKB-KW"/>
</dbReference>
<dbReference type="GO" id="GO:0000289">
    <property type="term" value="P:nuclear-transcribed mRNA poly(A) tail shortening"/>
    <property type="evidence" value="ECO:0007669"/>
    <property type="project" value="UniProtKB-UniRule"/>
</dbReference>
<dbReference type="CDD" id="cd06143">
    <property type="entry name" value="PAN2_exo"/>
    <property type="match status" value="1"/>
</dbReference>
<dbReference type="FunFam" id="3.30.420.10:FF:000028">
    <property type="entry name" value="PAN2-PAN3 deadenylation complex catalytic subunit PAN2"/>
    <property type="match status" value="1"/>
</dbReference>
<dbReference type="Gene3D" id="3.90.70.10">
    <property type="entry name" value="Cysteine proteinases"/>
    <property type="match status" value="1"/>
</dbReference>
<dbReference type="Gene3D" id="3.30.420.10">
    <property type="entry name" value="Ribonuclease H-like superfamily/Ribonuclease H"/>
    <property type="match status" value="1"/>
</dbReference>
<dbReference type="Gene3D" id="2.130.10.10">
    <property type="entry name" value="YVTN repeat-like/Quinoprotein amine dehydrogenase"/>
    <property type="match status" value="1"/>
</dbReference>
<dbReference type="HAMAP" id="MF_03182">
    <property type="entry name" value="PAN2"/>
    <property type="match status" value="1"/>
</dbReference>
<dbReference type="InterPro" id="IPR013520">
    <property type="entry name" value="Exonuclease_RNaseT/DNA_pol3"/>
</dbReference>
<dbReference type="InterPro" id="IPR030843">
    <property type="entry name" value="PAN2"/>
</dbReference>
<dbReference type="InterPro" id="IPR050785">
    <property type="entry name" value="PAN2-PAN3_catalytic_subunit"/>
</dbReference>
<dbReference type="InterPro" id="IPR048841">
    <property type="entry name" value="PAN2_N"/>
</dbReference>
<dbReference type="InterPro" id="IPR028881">
    <property type="entry name" value="PAN2_UCH_dom"/>
</dbReference>
<dbReference type="InterPro" id="IPR038765">
    <property type="entry name" value="Papain-like_cys_pep_sf"/>
</dbReference>
<dbReference type="InterPro" id="IPR012337">
    <property type="entry name" value="RNaseH-like_sf"/>
</dbReference>
<dbReference type="InterPro" id="IPR036397">
    <property type="entry name" value="RNaseH_sf"/>
</dbReference>
<dbReference type="InterPro" id="IPR028889">
    <property type="entry name" value="USP_dom"/>
</dbReference>
<dbReference type="InterPro" id="IPR015943">
    <property type="entry name" value="WD40/YVTN_repeat-like_dom_sf"/>
</dbReference>
<dbReference type="InterPro" id="IPR036322">
    <property type="entry name" value="WD40_repeat_dom_sf"/>
</dbReference>
<dbReference type="PANTHER" id="PTHR15728">
    <property type="entry name" value="DEADENYLATION COMPLEX CATALYTIC SUBUNIT PAN2"/>
    <property type="match status" value="1"/>
</dbReference>
<dbReference type="PANTHER" id="PTHR15728:SF0">
    <property type="entry name" value="PAN2-PAN3 DEADENYLATION COMPLEX CATALYTIC SUBUNIT PAN2"/>
    <property type="match status" value="1"/>
</dbReference>
<dbReference type="Pfam" id="PF20770">
    <property type="entry name" value="PAN2_N"/>
    <property type="match status" value="1"/>
</dbReference>
<dbReference type="Pfam" id="PF00929">
    <property type="entry name" value="RNase_T"/>
    <property type="match status" value="1"/>
</dbReference>
<dbReference type="Pfam" id="PF13423">
    <property type="entry name" value="UCH_1"/>
    <property type="match status" value="1"/>
</dbReference>
<dbReference type="SMART" id="SM00479">
    <property type="entry name" value="EXOIII"/>
    <property type="match status" value="1"/>
</dbReference>
<dbReference type="SUPFAM" id="SSF54001">
    <property type="entry name" value="Cysteine proteinases"/>
    <property type="match status" value="1"/>
</dbReference>
<dbReference type="SUPFAM" id="SSF53098">
    <property type="entry name" value="Ribonuclease H-like"/>
    <property type="match status" value="1"/>
</dbReference>
<dbReference type="SUPFAM" id="SSF50978">
    <property type="entry name" value="WD40 repeat-like"/>
    <property type="match status" value="1"/>
</dbReference>
<dbReference type="PROSITE" id="PS50235">
    <property type="entry name" value="USP_3"/>
    <property type="match status" value="1"/>
</dbReference>
<sequence>MNNWQLSYQSPEDLTYHLKKPYLQYDKKEKQVTKVVFDTEANLIWAGDSYGRVSSYDPTYSLYTRHTAHIGSMPVVDLLSNKNGILSLSSDSLHFSNRRGVTQMSLTSADIAQLSDMKTMCYYTNNQNQVLCAGGNTASGIISVDLIKGTLASSTYFTSKVKHMSSNNKLVAIGKQAGSIDLFDPVSNRVIHSLSGHSASITSMDFKDNTLVTAGKSKTFGYLQSDQFINVYDVRIMKQLPPISFSKTPNFVGNHTSSKFPIGADFLQLHPVLPTVVAVASSSGSFDFIDLVNPSLRTPYIHPCKSISQFTLSPSGDYLAFLEEESMINMWNRSNSMSGFTNSAAVLEYQDYPEDSFIPYRVEVGQESYPLSSIGLPYYSETLLSAWPHTVFKTEGIISKKIEGSSSSETDNNSTKSVNRSLSHLSSSKYSLQPYNKFKYGPRNVIEPYKSLRERRKKMVSTTEDNQHRKELLEYKPSNNIDIPPAYSKLQMIYGKFGVMDFDFGGFNTTQYSGLETDIDCVYINEIIHLYRFVPEVYNFVVNCLEDEHIQEKSVLTELGFLFDMMTRANGKICRASNFVDVLESISTANELGLFTDEISTVSGHAGKPSLDEGNLSSHIYNLNLSVDADAEEIMKRSYGKYMTVAQKFNIFLLDRLISEEVERKLHSTDAIVLEELFGLNVDTEIHTLSTCGNFVRQPHLVSSLVVLSPASNNVKYSNKKLSNQTILPYIESSMCRFKQLTARCSKCEKLQNQEYESIVRNLPPLLSLNICLSPEEWTTAKTVNGWLSNHFFATISKDRPILKLQATDLKTSNAIFKYELMSYVARITDDFGEEHLVTYAKILDQKIQQYKWYMFNDFLVQEIDEDEALNISYWWKTPEIVVYSDAEEIRKPFVSVSKLKVDTDILYRDYFSEGIRKDVIRQYRLLTKDEAPGPGTLVALDAEFVSLTEPYLEINCKGMKTLLKPAKKSLARVSLLRGEGELEGVPFIDDYIINECHIEDYLTQFSGIEPGDLDPKLSKKSLVKRQVFYRKMWLLLQLGCVFVGHGLTNDFRQINIYVPESQIRDTSLYYLKGKRYLSLRYLAFAVLRKQVQTGNHDSIEDAHTALLLYRKYLELKEKGVFEMYLENIYDEGRKFGFKVPDTI</sequence>
<accession>Q6CMN5</accession>
<keyword id="KW-0963">Cytoplasm</keyword>
<keyword id="KW-0269">Exonuclease</keyword>
<keyword id="KW-0378">Hydrolase</keyword>
<keyword id="KW-0479">Metal-binding</keyword>
<keyword id="KW-0507">mRNA processing</keyword>
<keyword id="KW-0540">Nuclease</keyword>
<keyword id="KW-1185">Reference proteome</keyword>
<keyword id="KW-0677">Repeat</keyword>
<keyword id="KW-0853">WD repeat</keyword>
<protein>
    <recommendedName>
        <fullName evidence="1">PAN2-PAN3 deadenylation complex catalytic subunit PAN2</fullName>
        <ecNumber evidence="1">3.1.13.4</ecNumber>
    </recommendedName>
    <alternativeName>
        <fullName evidence="1">PAB1P-dependent poly(A)-specific ribonuclease</fullName>
    </alternativeName>
    <alternativeName>
        <fullName evidence="1">Poly(A)-nuclease deadenylation complex subunit 2</fullName>
        <shortName evidence="1">PAN deadenylation complex subunit 2</shortName>
    </alternativeName>
</protein>
<reference key="1">
    <citation type="journal article" date="2004" name="Nature">
        <title>Genome evolution in yeasts.</title>
        <authorList>
            <person name="Dujon B."/>
            <person name="Sherman D."/>
            <person name="Fischer G."/>
            <person name="Durrens P."/>
            <person name="Casaregola S."/>
            <person name="Lafontaine I."/>
            <person name="de Montigny J."/>
            <person name="Marck C."/>
            <person name="Neuveglise C."/>
            <person name="Talla E."/>
            <person name="Goffard N."/>
            <person name="Frangeul L."/>
            <person name="Aigle M."/>
            <person name="Anthouard V."/>
            <person name="Babour A."/>
            <person name="Barbe V."/>
            <person name="Barnay S."/>
            <person name="Blanchin S."/>
            <person name="Beckerich J.-M."/>
            <person name="Beyne E."/>
            <person name="Bleykasten C."/>
            <person name="Boisrame A."/>
            <person name="Boyer J."/>
            <person name="Cattolico L."/>
            <person name="Confanioleri F."/>
            <person name="de Daruvar A."/>
            <person name="Despons L."/>
            <person name="Fabre E."/>
            <person name="Fairhead C."/>
            <person name="Ferry-Dumazet H."/>
            <person name="Groppi A."/>
            <person name="Hantraye F."/>
            <person name="Hennequin C."/>
            <person name="Jauniaux N."/>
            <person name="Joyet P."/>
            <person name="Kachouri R."/>
            <person name="Kerrest A."/>
            <person name="Koszul R."/>
            <person name="Lemaire M."/>
            <person name="Lesur I."/>
            <person name="Ma L."/>
            <person name="Muller H."/>
            <person name="Nicaud J.-M."/>
            <person name="Nikolski M."/>
            <person name="Oztas S."/>
            <person name="Ozier-Kalogeropoulos O."/>
            <person name="Pellenz S."/>
            <person name="Potier S."/>
            <person name="Richard G.-F."/>
            <person name="Straub M.-L."/>
            <person name="Suleau A."/>
            <person name="Swennen D."/>
            <person name="Tekaia F."/>
            <person name="Wesolowski-Louvel M."/>
            <person name="Westhof E."/>
            <person name="Wirth B."/>
            <person name="Zeniou-Meyer M."/>
            <person name="Zivanovic Y."/>
            <person name="Bolotin-Fukuhara M."/>
            <person name="Thierry A."/>
            <person name="Bouchier C."/>
            <person name="Caudron B."/>
            <person name="Scarpelli C."/>
            <person name="Gaillardin C."/>
            <person name="Weissenbach J."/>
            <person name="Wincker P."/>
            <person name="Souciet J.-L."/>
        </authorList>
    </citation>
    <scope>NUCLEOTIDE SEQUENCE [LARGE SCALE GENOMIC DNA]</scope>
    <source>
        <strain>ATCC 8585 / CBS 2359 / DSM 70799 / NBRC 1267 / NRRL Y-1140 / WM37</strain>
    </source>
</reference>
<gene>
    <name evidence="1" type="primary">PAN2</name>
    <name type="ordered locus">KLLA0E18964g</name>
</gene>